<feature type="chain" id="PRO_1000143098" description="Small ribosomal subunit protein uS15">
    <location>
        <begin position="1"/>
        <end position="89"/>
    </location>
</feature>
<reference key="1">
    <citation type="journal article" date="2009" name="Infect. Immun.">
        <title>Comparative genomics reveal extensive transposon-mediated genomic plasticity and diversity among potential effector proteins within the genus Coxiella.</title>
        <authorList>
            <person name="Beare P.A."/>
            <person name="Unsworth N."/>
            <person name="Andoh M."/>
            <person name="Voth D.E."/>
            <person name="Omsland A."/>
            <person name="Gilk S.D."/>
            <person name="Williams K.P."/>
            <person name="Sobral B.W."/>
            <person name="Kupko J.J. III"/>
            <person name="Porcella S.F."/>
            <person name="Samuel J.E."/>
            <person name="Heinzen R.A."/>
        </authorList>
    </citation>
    <scope>NUCLEOTIDE SEQUENCE [LARGE SCALE GENOMIC DNA]</scope>
    <source>
        <strain>CbuK_Q154</strain>
    </source>
</reference>
<evidence type="ECO:0000255" key="1">
    <source>
        <dbReference type="HAMAP-Rule" id="MF_01343"/>
    </source>
</evidence>
<evidence type="ECO:0000305" key="2"/>
<comment type="function">
    <text evidence="1">One of the primary rRNA binding proteins, it binds directly to 16S rRNA where it helps nucleate assembly of the platform of the 30S subunit by binding and bridging several RNA helices of the 16S rRNA.</text>
</comment>
<comment type="function">
    <text evidence="1">Forms an intersubunit bridge (bridge B4) with the 23S rRNA of the 50S subunit in the ribosome.</text>
</comment>
<comment type="subunit">
    <text evidence="1">Part of the 30S ribosomal subunit. Forms a bridge to the 50S subunit in the 70S ribosome, contacting the 23S rRNA.</text>
</comment>
<comment type="similarity">
    <text evidence="1">Belongs to the universal ribosomal protein uS15 family.</text>
</comment>
<accession>B6J6S6</accession>
<proteinExistence type="inferred from homology"/>
<keyword id="KW-0687">Ribonucleoprotein</keyword>
<keyword id="KW-0689">Ribosomal protein</keyword>
<keyword id="KW-0694">RNA-binding</keyword>
<keyword id="KW-0699">rRNA-binding</keyword>
<protein>
    <recommendedName>
        <fullName evidence="1">Small ribosomal subunit protein uS15</fullName>
    </recommendedName>
    <alternativeName>
        <fullName evidence="2">30S ribosomal protein S15</fullName>
    </alternativeName>
</protein>
<dbReference type="EMBL" id="CP001020">
    <property type="protein sequence ID" value="ACJ19975.1"/>
    <property type="molecule type" value="Genomic_DNA"/>
</dbReference>
<dbReference type="RefSeq" id="WP_005768842.1">
    <property type="nucleotide sequence ID" value="NC_011528.1"/>
</dbReference>
<dbReference type="SMR" id="B6J6S6"/>
<dbReference type="KEGG" id="cbc:CbuK_0719"/>
<dbReference type="HOGENOM" id="CLU_148518_0_0_6"/>
<dbReference type="GO" id="GO:0022627">
    <property type="term" value="C:cytosolic small ribosomal subunit"/>
    <property type="evidence" value="ECO:0007669"/>
    <property type="project" value="TreeGrafter"/>
</dbReference>
<dbReference type="GO" id="GO:0019843">
    <property type="term" value="F:rRNA binding"/>
    <property type="evidence" value="ECO:0007669"/>
    <property type="project" value="UniProtKB-UniRule"/>
</dbReference>
<dbReference type="GO" id="GO:0003735">
    <property type="term" value="F:structural constituent of ribosome"/>
    <property type="evidence" value="ECO:0007669"/>
    <property type="project" value="InterPro"/>
</dbReference>
<dbReference type="GO" id="GO:0006412">
    <property type="term" value="P:translation"/>
    <property type="evidence" value="ECO:0007669"/>
    <property type="project" value="UniProtKB-UniRule"/>
</dbReference>
<dbReference type="CDD" id="cd00353">
    <property type="entry name" value="Ribosomal_S15p_S13e"/>
    <property type="match status" value="1"/>
</dbReference>
<dbReference type="FunFam" id="1.10.287.10:FF:000002">
    <property type="entry name" value="30S ribosomal protein S15"/>
    <property type="match status" value="1"/>
</dbReference>
<dbReference type="Gene3D" id="6.10.250.3130">
    <property type="match status" value="1"/>
</dbReference>
<dbReference type="Gene3D" id="1.10.287.10">
    <property type="entry name" value="S15/NS1, RNA-binding"/>
    <property type="match status" value="1"/>
</dbReference>
<dbReference type="HAMAP" id="MF_01343_B">
    <property type="entry name" value="Ribosomal_uS15_B"/>
    <property type="match status" value="1"/>
</dbReference>
<dbReference type="InterPro" id="IPR000589">
    <property type="entry name" value="Ribosomal_uS15"/>
</dbReference>
<dbReference type="InterPro" id="IPR005290">
    <property type="entry name" value="Ribosomal_uS15_bac-type"/>
</dbReference>
<dbReference type="InterPro" id="IPR009068">
    <property type="entry name" value="uS15_NS1_RNA-bd_sf"/>
</dbReference>
<dbReference type="NCBIfam" id="TIGR00952">
    <property type="entry name" value="S15_bact"/>
    <property type="match status" value="1"/>
</dbReference>
<dbReference type="PANTHER" id="PTHR23321">
    <property type="entry name" value="RIBOSOMAL PROTEIN S15, BACTERIAL AND ORGANELLAR"/>
    <property type="match status" value="1"/>
</dbReference>
<dbReference type="PANTHER" id="PTHR23321:SF26">
    <property type="entry name" value="SMALL RIBOSOMAL SUBUNIT PROTEIN US15M"/>
    <property type="match status" value="1"/>
</dbReference>
<dbReference type="Pfam" id="PF00312">
    <property type="entry name" value="Ribosomal_S15"/>
    <property type="match status" value="1"/>
</dbReference>
<dbReference type="SMART" id="SM01387">
    <property type="entry name" value="Ribosomal_S15"/>
    <property type="match status" value="1"/>
</dbReference>
<dbReference type="SUPFAM" id="SSF47060">
    <property type="entry name" value="S15/NS1 RNA-binding domain"/>
    <property type="match status" value="1"/>
</dbReference>
<dbReference type="PROSITE" id="PS00362">
    <property type="entry name" value="RIBOSOMAL_S15"/>
    <property type="match status" value="1"/>
</dbReference>
<sequence>MSLASAETAKIVKEYQLGKDDTGSPEVQVAILTAKIIKLTDHMKAHKHDHHSRRGLLRMVSQRRKLLNFLKRNDLQRYLKLIERLGLRS</sequence>
<gene>
    <name evidence="1" type="primary">rpsO</name>
    <name type="ordered locus">CbuK_0719</name>
</gene>
<name>RS15_COXB1</name>
<organism>
    <name type="scientific">Coxiella burnetii (strain CbuK_Q154)</name>
    <name type="common">Coxiella burnetii (strain Q154)</name>
    <dbReference type="NCBI Taxonomy" id="434924"/>
    <lineage>
        <taxon>Bacteria</taxon>
        <taxon>Pseudomonadati</taxon>
        <taxon>Pseudomonadota</taxon>
        <taxon>Gammaproteobacteria</taxon>
        <taxon>Legionellales</taxon>
        <taxon>Coxiellaceae</taxon>
        <taxon>Coxiella</taxon>
    </lineage>
</organism>